<organism>
    <name type="scientific">Aspergillus niger (strain ATCC MYA-4892 / CBS 513.88 / FGSC A1513)</name>
    <dbReference type="NCBI Taxonomy" id="425011"/>
    <lineage>
        <taxon>Eukaryota</taxon>
        <taxon>Fungi</taxon>
        <taxon>Dikarya</taxon>
        <taxon>Ascomycota</taxon>
        <taxon>Pezizomycotina</taxon>
        <taxon>Eurotiomycetes</taxon>
        <taxon>Eurotiomycetidae</taxon>
        <taxon>Eurotiales</taxon>
        <taxon>Aspergillaceae</taxon>
        <taxon>Aspergillus</taxon>
        <taxon>Aspergillus subgen. Circumdati</taxon>
    </lineage>
</organism>
<proteinExistence type="inferred from homology"/>
<accession>A2QUY7</accession>
<reference key="1">
    <citation type="journal article" date="2007" name="Nat. Biotechnol.">
        <title>Genome sequencing and analysis of the versatile cell factory Aspergillus niger CBS 513.88.</title>
        <authorList>
            <person name="Pel H.J."/>
            <person name="de Winde J.H."/>
            <person name="Archer D.B."/>
            <person name="Dyer P.S."/>
            <person name="Hofmann G."/>
            <person name="Schaap P.J."/>
            <person name="Turner G."/>
            <person name="de Vries R.P."/>
            <person name="Albang R."/>
            <person name="Albermann K."/>
            <person name="Andersen M.R."/>
            <person name="Bendtsen J.D."/>
            <person name="Benen J.A.E."/>
            <person name="van den Berg M."/>
            <person name="Breestraat S."/>
            <person name="Caddick M.X."/>
            <person name="Contreras R."/>
            <person name="Cornell M."/>
            <person name="Coutinho P.M."/>
            <person name="Danchin E.G.J."/>
            <person name="Debets A.J.M."/>
            <person name="Dekker P."/>
            <person name="van Dijck P.W.M."/>
            <person name="van Dijk A."/>
            <person name="Dijkhuizen L."/>
            <person name="Driessen A.J.M."/>
            <person name="d'Enfert C."/>
            <person name="Geysens S."/>
            <person name="Goosen C."/>
            <person name="Groot G.S.P."/>
            <person name="de Groot P.W.J."/>
            <person name="Guillemette T."/>
            <person name="Henrissat B."/>
            <person name="Herweijer M."/>
            <person name="van den Hombergh J.P.T.W."/>
            <person name="van den Hondel C.A.M.J.J."/>
            <person name="van der Heijden R.T.J.M."/>
            <person name="van der Kaaij R.M."/>
            <person name="Klis F.M."/>
            <person name="Kools H.J."/>
            <person name="Kubicek C.P."/>
            <person name="van Kuyk P.A."/>
            <person name="Lauber J."/>
            <person name="Lu X."/>
            <person name="van der Maarel M.J.E.C."/>
            <person name="Meulenberg R."/>
            <person name="Menke H."/>
            <person name="Mortimer M.A."/>
            <person name="Nielsen J."/>
            <person name="Oliver S.G."/>
            <person name="Olsthoorn M."/>
            <person name="Pal K."/>
            <person name="van Peij N.N.M.E."/>
            <person name="Ram A.F.J."/>
            <person name="Rinas U."/>
            <person name="Roubos J.A."/>
            <person name="Sagt C.M.J."/>
            <person name="Schmoll M."/>
            <person name="Sun J."/>
            <person name="Ussery D."/>
            <person name="Varga J."/>
            <person name="Vervecken W."/>
            <person name="van de Vondervoort P.J.J."/>
            <person name="Wedler H."/>
            <person name="Woesten H.A.B."/>
            <person name="Zeng A.-P."/>
            <person name="van Ooyen A.J.J."/>
            <person name="Visser J."/>
            <person name="Stam H."/>
        </authorList>
    </citation>
    <scope>NUCLEOTIDE SEQUENCE [LARGE SCALE GENOMIC DNA]</scope>
    <source>
        <strain>ATCC MYA-4892 / CBS 513.88 / FGSC A1513</strain>
    </source>
</reference>
<evidence type="ECO:0000250" key="1"/>
<evidence type="ECO:0000255" key="2">
    <source>
        <dbReference type="PROSITE-ProRule" id="PRU00541"/>
    </source>
</evidence>
<evidence type="ECO:0000255" key="3">
    <source>
        <dbReference type="PROSITE-ProRule" id="PRU00542"/>
    </source>
</evidence>
<evidence type="ECO:0000256" key="4">
    <source>
        <dbReference type="SAM" id="MobiDB-lite"/>
    </source>
</evidence>
<evidence type="ECO:0000305" key="5"/>
<protein>
    <recommendedName>
        <fullName>ATP-dependent RNA helicase dbp5</fullName>
        <ecNumber>3.6.4.13</ecNumber>
    </recommendedName>
</protein>
<comment type="function">
    <text evidence="1">ATP-dependent RNA helicase associated with the nuclear pore complex and essential for mRNA export from the nucleus. May participate in a terminal step of mRNA export through the removal of proteins that accompany mRNA through the nucleopore complex. May also be involved in early transcription (By similarity).</text>
</comment>
<comment type="catalytic activity">
    <reaction>
        <text>ATP + H2O = ADP + phosphate + H(+)</text>
        <dbReference type="Rhea" id="RHEA:13065"/>
        <dbReference type="ChEBI" id="CHEBI:15377"/>
        <dbReference type="ChEBI" id="CHEBI:15378"/>
        <dbReference type="ChEBI" id="CHEBI:30616"/>
        <dbReference type="ChEBI" id="CHEBI:43474"/>
        <dbReference type="ChEBI" id="CHEBI:456216"/>
        <dbReference type="EC" id="3.6.4.13"/>
    </reaction>
</comment>
<comment type="subunit">
    <text evidence="1">Associates with the nuclear pore complex.</text>
</comment>
<comment type="subcellular location">
    <subcellularLocation>
        <location evidence="1">Cytoplasm</location>
    </subcellularLocation>
    <subcellularLocation>
        <location>Nucleus</location>
        <location>Nuclear pore complex</location>
    </subcellularLocation>
    <subcellularLocation>
        <location evidence="1">Nucleus membrane</location>
        <topology evidence="1">Peripheral membrane protein</topology>
        <orientation evidence="1">Cytoplasmic side</orientation>
    </subcellularLocation>
    <text evidence="1">Nuclear pore complex cytoplasmic fibrils.</text>
</comment>
<comment type="domain">
    <text>The Q motif is unique to and characteristic of the DEAD box family of RNA helicases and controls ATP binding and hydrolysis.</text>
</comment>
<comment type="similarity">
    <text evidence="5">Belongs to the DEAD box helicase family. DDX19/DBP5 subfamily.</text>
</comment>
<dbReference type="EC" id="3.6.4.13"/>
<dbReference type="EMBL" id="AM270213">
    <property type="protein sequence ID" value="CAK49126.1"/>
    <property type="molecule type" value="Genomic_DNA"/>
</dbReference>
<dbReference type="RefSeq" id="XP_001402429.1">
    <property type="nucleotide sequence ID" value="XM_001402392.2"/>
</dbReference>
<dbReference type="SMR" id="A2QUY7"/>
<dbReference type="EnsemblFungi" id="CAK49126">
    <property type="protein sequence ID" value="CAK49126"/>
    <property type="gene ID" value="An10g00360"/>
</dbReference>
<dbReference type="GeneID" id="4990289"/>
<dbReference type="KEGG" id="ang:An10g00360"/>
<dbReference type="VEuPathDB" id="FungiDB:An10g00360"/>
<dbReference type="HOGENOM" id="CLU_003041_1_0_1"/>
<dbReference type="Proteomes" id="UP000006706">
    <property type="component" value="Chromosome 5EL"/>
</dbReference>
<dbReference type="GO" id="GO:0005934">
    <property type="term" value="C:cellular bud tip"/>
    <property type="evidence" value="ECO:0007669"/>
    <property type="project" value="EnsemblFungi"/>
</dbReference>
<dbReference type="GO" id="GO:0010494">
    <property type="term" value="C:cytoplasmic stress granule"/>
    <property type="evidence" value="ECO:0007669"/>
    <property type="project" value="EnsemblFungi"/>
</dbReference>
<dbReference type="GO" id="GO:0031965">
    <property type="term" value="C:nuclear membrane"/>
    <property type="evidence" value="ECO:0007669"/>
    <property type="project" value="UniProtKB-SubCell"/>
</dbReference>
<dbReference type="GO" id="GO:0044614">
    <property type="term" value="C:nuclear pore cytoplasmic filaments"/>
    <property type="evidence" value="ECO:0007669"/>
    <property type="project" value="EnsemblFungi"/>
</dbReference>
<dbReference type="GO" id="GO:0005524">
    <property type="term" value="F:ATP binding"/>
    <property type="evidence" value="ECO:0007669"/>
    <property type="project" value="UniProtKB-KW"/>
</dbReference>
<dbReference type="GO" id="GO:0016887">
    <property type="term" value="F:ATP hydrolysis activity"/>
    <property type="evidence" value="ECO:0007669"/>
    <property type="project" value="RHEA"/>
</dbReference>
<dbReference type="GO" id="GO:0000822">
    <property type="term" value="F:inositol hexakisphosphate binding"/>
    <property type="evidence" value="ECO:0007669"/>
    <property type="project" value="EnsemblFungi"/>
</dbReference>
<dbReference type="GO" id="GO:0003723">
    <property type="term" value="F:RNA binding"/>
    <property type="evidence" value="ECO:0007669"/>
    <property type="project" value="UniProtKB-KW"/>
</dbReference>
<dbReference type="GO" id="GO:0003724">
    <property type="term" value="F:RNA helicase activity"/>
    <property type="evidence" value="ECO:0007669"/>
    <property type="project" value="UniProtKB-EC"/>
</dbReference>
<dbReference type="GO" id="GO:0016973">
    <property type="term" value="P:poly(A)+ mRNA export from nucleus"/>
    <property type="evidence" value="ECO:0007669"/>
    <property type="project" value="EnsemblFungi"/>
</dbReference>
<dbReference type="GO" id="GO:0015031">
    <property type="term" value="P:protein transport"/>
    <property type="evidence" value="ECO:0007669"/>
    <property type="project" value="UniProtKB-KW"/>
</dbReference>
<dbReference type="GO" id="GO:0006415">
    <property type="term" value="P:translational termination"/>
    <property type="evidence" value="ECO:0007669"/>
    <property type="project" value="EnsemblFungi"/>
</dbReference>
<dbReference type="GO" id="GO:0006409">
    <property type="term" value="P:tRNA export from nucleus"/>
    <property type="evidence" value="ECO:0007669"/>
    <property type="project" value="EnsemblFungi"/>
</dbReference>
<dbReference type="CDD" id="cd17963">
    <property type="entry name" value="DEADc_DDX19_DDX25"/>
    <property type="match status" value="1"/>
</dbReference>
<dbReference type="CDD" id="cd18787">
    <property type="entry name" value="SF2_C_DEAD"/>
    <property type="match status" value="1"/>
</dbReference>
<dbReference type="FunFam" id="3.40.50.300:FF:000849">
    <property type="entry name" value="ATP-dependent RNA helicase DBP5"/>
    <property type="match status" value="1"/>
</dbReference>
<dbReference type="Gene3D" id="3.40.50.300">
    <property type="entry name" value="P-loop containing nucleotide triphosphate hydrolases"/>
    <property type="match status" value="2"/>
</dbReference>
<dbReference type="InterPro" id="IPR011545">
    <property type="entry name" value="DEAD/DEAH_box_helicase_dom"/>
</dbReference>
<dbReference type="InterPro" id="IPR014001">
    <property type="entry name" value="Helicase_ATP-bd"/>
</dbReference>
<dbReference type="InterPro" id="IPR001650">
    <property type="entry name" value="Helicase_C-like"/>
</dbReference>
<dbReference type="InterPro" id="IPR027417">
    <property type="entry name" value="P-loop_NTPase"/>
</dbReference>
<dbReference type="InterPro" id="IPR000629">
    <property type="entry name" value="RNA-helicase_DEAD-box_CS"/>
</dbReference>
<dbReference type="InterPro" id="IPR014014">
    <property type="entry name" value="RNA_helicase_DEAD_Q_motif"/>
</dbReference>
<dbReference type="PANTHER" id="PTHR47958">
    <property type="entry name" value="ATP-DEPENDENT RNA HELICASE DBP3"/>
    <property type="match status" value="1"/>
</dbReference>
<dbReference type="Pfam" id="PF00270">
    <property type="entry name" value="DEAD"/>
    <property type="match status" value="1"/>
</dbReference>
<dbReference type="Pfam" id="PF00271">
    <property type="entry name" value="Helicase_C"/>
    <property type="match status" value="1"/>
</dbReference>
<dbReference type="SMART" id="SM00487">
    <property type="entry name" value="DEXDc"/>
    <property type="match status" value="1"/>
</dbReference>
<dbReference type="SMART" id="SM00490">
    <property type="entry name" value="HELICc"/>
    <property type="match status" value="1"/>
</dbReference>
<dbReference type="SUPFAM" id="SSF52540">
    <property type="entry name" value="P-loop containing nucleoside triphosphate hydrolases"/>
    <property type="match status" value="1"/>
</dbReference>
<dbReference type="PROSITE" id="PS00039">
    <property type="entry name" value="DEAD_ATP_HELICASE"/>
    <property type="match status" value="1"/>
</dbReference>
<dbReference type="PROSITE" id="PS51192">
    <property type="entry name" value="HELICASE_ATP_BIND_1"/>
    <property type="match status" value="1"/>
</dbReference>
<dbReference type="PROSITE" id="PS51194">
    <property type="entry name" value="HELICASE_CTER"/>
    <property type="match status" value="1"/>
</dbReference>
<dbReference type="PROSITE" id="PS51195">
    <property type="entry name" value="Q_MOTIF"/>
    <property type="match status" value="1"/>
</dbReference>
<name>DBP5_ASPNC</name>
<sequence length="482" mass="53088">MASEQPEAGSLADRITKPEEPAPAEAPEQTEDIPQTDGAAAQQGGSDLHEPDYTVEVKLSDLQADPNNPLFSVKNFEDLGLDPRILQGLSAMNFRKPSKIQERALPLLLGNPAKNLVGQSQSGTGKTAAFVLNILSRLDLSSEQLQKTPQALILAPTRELARQIVGVIQVMGQFLDGLVIGTAVPADTGARPAKMECSVVVGTPGTVMDMIKRRIMIANKLRVLVLDEADNMLDQQGLGDQCIRVKALLPRDIQVVLFSATFPAHVHEYASKFAPQANEITLQHEELTVEGIKQLYLDCSNDEDKYQTLVNLYGLLTVGSSIIFVKTRASAQEIEKRMVAEGHTVASLTGGIEGSQRDAVIDQFRAGHAKVLITTNVLARGIDVSTVSMVINYDIPEIHQPGARQRQADFQTYLHRIGRTGRFGRVGVSISFVSNREEWEMLNQIQRYFNTNIQRIDTKDWDEVEEIIKKTIKSSRAQLGFR</sequence>
<gene>
    <name type="primary">dbp5</name>
    <name type="ORF">An10g00360</name>
</gene>
<keyword id="KW-0067">ATP-binding</keyword>
<keyword id="KW-0963">Cytoplasm</keyword>
<keyword id="KW-0347">Helicase</keyword>
<keyword id="KW-0378">Hydrolase</keyword>
<keyword id="KW-0472">Membrane</keyword>
<keyword id="KW-0509">mRNA transport</keyword>
<keyword id="KW-0906">Nuclear pore complex</keyword>
<keyword id="KW-0547">Nucleotide-binding</keyword>
<keyword id="KW-0539">Nucleus</keyword>
<keyword id="KW-0653">Protein transport</keyword>
<keyword id="KW-1185">Reference proteome</keyword>
<keyword id="KW-0694">RNA-binding</keyword>
<keyword id="KW-0811">Translocation</keyword>
<keyword id="KW-0813">Transport</keyword>
<feature type="chain" id="PRO_0000281703" description="ATP-dependent RNA helicase dbp5">
    <location>
        <begin position="1"/>
        <end position="482"/>
    </location>
</feature>
<feature type="domain" description="Helicase ATP-binding" evidence="2">
    <location>
        <begin position="107"/>
        <end position="280"/>
    </location>
</feature>
<feature type="domain" description="Helicase C-terminal" evidence="3">
    <location>
        <begin position="291"/>
        <end position="464"/>
    </location>
</feature>
<feature type="region of interest" description="Disordered" evidence="4">
    <location>
        <begin position="1"/>
        <end position="49"/>
    </location>
</feature>
<feature type="short sequence motif" description="Q motif">
    <location>
        <begin position="74"/>
        <end position="102"/>
    </location>
</feature>
<feature type="short sequence motif" description="DEAD box">
    <location>
        <begin position="227"/>
        <end position="230"/>
    </location>
</feature>
<feature type="binding site" evidence="2">
    <location>
        <begin position="120"/>
        <end position="127"/>
    </location>
    <ligand>
        <name>ATP</name>
        <dbReference type="ChEBI" id="CHEBI:30616"/>
    </ligand>
</feature>